<reference key="1">
    <citation type="journal article" date="1990" name="Virology">
        <title>The complete DNA sequence of vaccinia virus.</title>
        <authorList>
            <person name="Goebel S.J."/>
            <person name="Johnson G.P."/>
            <person name="Perkus M.E."/>
            <person name="Davis S.W."/>
            <person name="Winslow J.P."/>
            <person name="Paoletti E."/>
        </authorList>
    </citation>
    <scope>NUCLEOTIDE SEQUENCE [LARGE SCALE GENOMIC DNA]</scope>
</reference>
<reference key="2">
    <citation type="journal article" date="1990" name="Virology">
        <title>Appendix to 'The complete DNA sequence of vaccinia virus'.</title>
        <authorList>
            <person name="Goebel S.J."/>
            <person name="Johnson G.P."/>
            <person name="Perkus M.E."/>
            <person name="Davis S.W."/>
            <person name="Winslow J.P."/>
            <person name="Paoletti E."/>
        </authorList>
    </citation>
    <scope>COMPLETE GENOME</scope>
</reference>
<accession>P21045</accession>
<gene>
    <name type="ORF">C14L</name>
</gene>
<dbReference type="EMBL" id="M35027">
    <property type="protein sequence ID" value="AAA47982.1"/>
    <property type="molecule type" value="Genomic_DNA"/>
</dbReference>
<dbReference type="PIR" id="I42502">
    <property type="entry name" value="I42502"/>
</dbReference>
<dbReference type="Proteomes" id="UP000008269">
    <property type="component" value="Segment"/>
</dbReference>
<feature type="chain" id="PRO_0000099414" description="Protein C14">
    <location>
        <begin position="1"/>
        <end position="82"/>
    </location>
</feature>
<organismHost>
    <name type="scientific">Homo sapiens</name>
    <name type="common">Human</name>
    <dbReference type="NCBI Taxonomy" id="9606"/>
</organismHost>
<name>VC14_VACCC</name>
<sequence length="82" mass="9304">MSILGVSIECKKSSTLLTFLTVRKMTRVFNKFPDMAYYRGDCLKAVYVTMTYKNTKTGETDYTYLSNGGCLHTIVMGSMVDY</sequence>
<protein>
    <recommendedName>
        <fullName>Protein C14</fullName>
    </recommendedName>
</protein>
<organism>
    <name type="scientific">Vaccinia virus (strain Copenhagen)</name>
    <name type="common">VACV</name>
    <dbReference type="NCBI Taxonomy" id="10249"/>
    <lineage>
        <taxon>Viruses</taxon>
        <taxon>Varidnaviria</taxon>
        <taxon>Bamfordvirae</taxon>
        <taxon>Nucleocytoviricota</taxon>
        <taxon>Pokkesviricetes</taxon>
        <taxon>Chitovirales</taxon>
        <taxon>Poxviridae</taxon>
        <taxon>Chordopoxvirinae</taxon>
        <taxon>Orthopoxvirus</taxon>
        <taxon>Vaccinia virus</taxon>
    </lineage>
</organism>
<keyword id="KW-1185">Reference proteome</keyword>
<proteinExistence type="predicted"/>